<gene>
    <name evidence="1" type="primary">psbT</name>
</gene>
<feature type="chain" id="PRO_0000217902" description="Photosystem II reaction center protein T">
    <location>
        <begin position="1"/>
        <end position="35"/>
    </location>
</feature>
<feature type="transmembrane region" description="Helical" evidence="1">
    <location>
        <begin position="3"/>
        <end position="23"/>
    </location>
</feature>
<geneLocation type="chloroplast"/>
<reference key="1">
    <citation type="journal article" date="2000" name="Am. J. Bot.">
        <title>Utility of 17 chloroplast genes for inferring the phylogeny of the basal angiosperms.</title>
        <authorList>
            <person name="Graham S.W."/>
            <person name="Olmstead R.G."/>
        </authorList>
    </citation>
    <scope>NUCLEOTIDE SEQUENCE [GENOMIC DNA]</scope>
</reference>
<protein>
    <recommendedName>
        <fullName evidence="1">Photosystem II reaction center protein T</fullName>
        <shortName evidence="1">PSII-T</shortName>
    </recommendedName>
</protein>
<name>PSBT_ASACA</name>
<sequence>MEALVYTFLLVSTLGIIFFAIFFREPPXILTKKTK</sequence>
<organism>
    <name type="scientific">Asarum canadense</name>
    <name type="common">Wild ginger</name>
    <dbReference type="NCBI Taxonomy" id="28498"/>
    <lineage>
        <taxon>Eukaryota</taxon>
        <taxon>Viridiplantae</taxon>
        <taxon>Streptophyta</taxon>
        <taxon>Embryophyta</taxon>
        <taxon>Tracheophyta</taxon>
        <taxon>Spermatophyta</taxon>
        <taxon>Magnoliopsida</taxon>
        <taxon>Magnoliidae</taxon>
        <taxon>Piperales</taxon>
        <taxon>Asaraceae</taxon>
        <taxon>Asarum</taxon>
    </lineage>
</organism>
<accession>Q9GFA7</accession>
<evidence type="ECO:0000255" key="1">
    <source>
        <dbReference type="HAMAP-Rule" id="MF_00808"/>
    </source>
</evidence>
<dbReference type="EMBL" id="AF123844">
    <property type="protein sequence ID" value="AAG26255.1"/>
    <property type="molecule type" value="Genomic_DNA"/>
</dbReference>
<dbReference type="GO" id="GO:0009535">
    <property type="term" value="C:chloroplast thylakoid membrane"/>
    <property type="evidence" value="ECO:0007669"/>
    <property type="project" value="UniProtKB-SubCell"/>
</dbReference>
<dbReference type="GO" id="GO:0009539">
    <property type="term" value="C:photosystem II reaction center"/>
    <property type="evidence" value="ECO:0007669"/>
    <property type="project" value="InterPro"/>
</dbReference>
<dbReference type="GO" id="GO:0015979">
    <property type="term" value="P:photosynthesis"/>
    <property type="evidence" value="ECO:0007669"/>
    <property type="project" value="UniProtKB-UniRule"/>
</dbReference>
<dbReference type="HAMAP" id="MF_00808">
    <property type="entry name" value="PSII_PsbT"/>
    <property type="match status" value="1"/>
</dbReference>
<dbReference type="InterPro" id="IPR001743">
    <property type="entry name" value="PSII_PsbT"/>
</dbReference>
<dbReference type="InterPro" id="IPR037268">
    <property type="entry name" value="PSII_PsbT_sf"/>
</dbReference>
<dbReference type="PANTHER" id="PTHR36411">
    <property type="match status" value="1"/>
</dbReference>
<dbReference type="PANTHER" id="PTHR36411:SF2">
    <property type="entry name" value="PHOTOSYSTEM II REACTION CENTER PROTEIN T"/>
    <property type="match status" value="1"/>
</dbReference>
<dbReference type="Pfam" id="PF01405">
    <property type="entry name" value="PsbT"/>
    <property type="match status" value="1"/>
</dbReference>
<dbReference type="SUPFAM" id="SSF161029">
    <property type="entry name" value="Photosystem II reaction center protein T, PsbT"/>
    <property type="match status" value="1"/>
</dbReference>
<proteinExistence type="inferred from homology"/>
<keyword id="KW-0150">Chloroplast</keyword>
<keyword id="KW-0472">Membrane</keyword>
<keyword id="KW-0602">Photosynthesis</keyword>
<keyword id="KW-0604">Photosystem II</keyword>
<keyword id="KW-0934">Plastid</keyword>
<keyword id="KW-0793">Thylakoid</keyword>
<keyword id="KW-0812">Transmembrane</keyword>
<keyword id="KW-1133">Transmembrane helix</keyword>
<comment type="function">
    <text evidence="1">Found at the monomer-monomer interface of the photosystem II (PS II) dimer, plays a role in assembly and dimerization of PSII. PSII is a light-driven water plastoquinone oxidoreductase, using light energy to abstract electrons from H(2)O, generating a proton gradient subsequently used for ATP formation.</text>
</comment>
<comment type="subunit">
    <text evidence="1">PSII is composed of 1 copy each of membrane proteins PsbA, PsbB, PsbC, PsbD, PsbE, PsbF, PsbH, PsbI, PsbJ, PsbK, PsbL, PsbM, PsbT, PsbY, PsbZ, Psb30/Ycf12, at least 3 peripheral proteins of the oxygen-evolving complex and a large number of cofactors. It forms dimeric complexes.</text>
</comment>
<comment type="subcellular location">
    <subcellularLocation>
        <location evidence="1">Plastid</location>
        <location evidence="1">Chloroplast thylakoid membrane</location>
        <topology evidence="1">Single-pass membrane protein</topology>
    </subcellularLocation>
</comment>
<comment type="similarity">
    <text evidence="1">Belongs to the PsbT family.</text>
</comment>